<evidence type="ECO:0000255" key="1">
    <source>
        <dbReference type="HAMAP-Rule" id="MF_00001"/>
    </source>
</evidence>
<reference key="1">
    <citation type="journal article" date="2007" name="PLoS Genet.">
        <title>Meningococcal genetic variation mechanisms viewed through comparative analysis of serogroup C strain FAM18.</title>
        <authorList>
            <person name="Bentley S.D."/>
            <person name="Vernikos G.S."/>
            <person name="Snyder L.A.S."/>
            <person name="Churcher C."/>
            <person name="Arrowsmith C."/>
            <person name="Chillingworth T."/>
            <person name="Cronin A."/>
            <person name="Davis P.H."/>
            <person name="Holroyd N.E."/>
            <person name="Jagels K."/>
            <person name="Maddison M."/>
            <person name="Moule S."/>
            <person name="Rabbinowitsch E."/>
            <person name="Sharp S."/>
            <person name="Unwin L."/>
            <person name="Whitehead S."/>
            <person name="Quail M.A."/>
            <person name="Achtman M."/>
            <person name="Barrell B.G."/>
            <person name="Saunders N.J."/>
            <person name="Parkhill J."/>
        </authorList>
    </citation>
    <scope>NUCLEOTIDE SEQUENCE [LARGE SCALE GENOMIC DNA]</scope>
    <source>
        <strain>ATCC 700532 / DSM 15464 / FAM18</strain>
    </source>
</reference>
<comment type="function">
    <text evidence="1">Catalyzes the condensation of carbamoyl phosphate and aspartate to form carbamoyl aspartate and inorganic phosphate, the committed step in the de novo pyrimidine nucleotide biosynthesis pathway.</text>
</comment>
<comment type="catalytic activity">
    <reaction evidence="1">
        <text>carbamoyl phosphate + L-aspartate = N-carbamoyl-L-aspartate + phosphate + H(+)</text>
        <dbReference type="Rhea" id="RHEA:20013"/>
        <dbReference type="ChEBI" id="CHEBI:15378"/>
        <dbReference type="ChEBI" id="CHEBI:29991"/>
        <dbReference type="ChEBI" id="CHEBI:32814"/>
        <dbReference type="ChEBI" id="CHEBI:43474"/>
        <dbReference type="ChEBI" id="CHEBI:58228"/>
        <dbReference type="EC" id="2.1.3.2"/>
    </reaction>
</comment>
<comment type="pathway">
    <text evidence="1">Pyrimidine metabolism; UMP biosynthesis via de novo pathway; (S)-dihydroorotate from bicarbonate: step 2/3.</text>
</comment>
<comment type="subunit">
    <text evidence="1">Heterododecamer (2C3:3R2) of six catalytic PyrB chains organized as two trimers (C3), and six regulatory PyrI chains organized as three dimers (R2).</text>
</comment>
<comment type="similarity">
    <text evidence="1">Belongs to the aspartate/ornithine carbamoyltransferase superfamily. ATCase family.</text>
</comment>
<protein>
    <recommendedName>
        <fullName evidence="1">Aspartate carbamoyltransferase catalytic subunit</fullName>
        <ecNumber evidence="1">2.1.3.2</ecNumber>
    </recommendedName>
    <alternativeName>
        <fullName evidence="1">Aspartate transcarbamylase</fullName>
        <shortName evidence="1">ATCase</shortName>
    </alternativeName>
</protein>
<sequence>MPNPLYRQHIISISDLSREQLECLLQTALKLKAHPRGDLLEGKLIGSCFFEPSTRTRLSFETAVQRLGGKVIGFSDGANTSAKKGETLADTARIISGYTDAIIQRHPKDGAARVAAEFSRVPVINAGDGTNQHPSQTLLDLVTIYETQGRLDKLKIAMAGDLKYGRTVHSLCQALKRWGCEFAFVSPPSLAMPDYITEELDEAGCRYRILGSLEEAAEWADILYMTRVQRERFDEQEFAKIQGKFNLDASMLARAKPNLRVLHPLPRVDEIHPDVDATPHAYYFEQATNGVYARMAILSLVLNEEV</sequence>
<dbReference type="EC" id="2.1.3.2" evidence="1"/>
<dbReference type="EMBL" id="AM421808">
    <property type="protein sequence ID" value="CAM09417.1"/>
    <property type="molecule type" value="Genomic_DNA"/>
</dbReference>
<dbReference type="RefSeq" id="WP_002216214.1">
    <property type="nucleotide sequence ID" value="NC_008767.1"/>
</dbReference>
<dbReference type="SMR" id="A1KRE1"/>
<dbReference type="GeneID" id="83618479"/>
<dbReference type="KEGG" id="nmc:NMC0098"/>
<dbReference type="HOGENOM" id="CLU_043846_1_2_4"/>
<dbReference type="UniPathway" id="UPA00070">
    <property type="reaction ID" value="UER00116"/>
</dbReference>
<dbReference type="Proteomes" id="UP000002286">
    <property type="component" value="Chromosome"/>
</dbReference>
<dbReference type="GO" id="GO:0005829">
    <property type="term" value="C:cytosol"/>
    <property type="evidence" value="ECO:0007669"/>
    <property type="project" value="TreeGrafter"/>
</dbReference>
<dbReference type="GO" id="GO:0016597">
    <property type="term" value="F:amino acid binding"/>
    <property type="evidence" value="ECO:0007669"/>
    <property type="project" value="InterPro"/>
</dbReference>
<dbReference type="GO" id="GO:0004070">
    <property type="term" value="F:aspartate carbamoyltransferase activity"/>
    <property type="evidence" value="ECO:0007669"/>
    <property type="project" value="UniProtKB-UniRule"/>
</dbReference>
<dbReference type="GO" id="GO:0006207">
    <property type="term" value="P:'de novo' pyrimidine nucleobase biosynthetic process"/>
    <property type="evidence" value="ECO:0007669"/>
    <property type="project" value="InterPro"/>
</dbReference>
<dbReference type="GO" id="GO:0044205">
    <property type="term" value="P:'de novo' UMP biosynthetic process"/>
    <property type="evidence" value="ECO:0007669"/>
    <property type="project" value="UniProtKB-UniRule"/>
</dbReference>
<dbReference type="GO" id="GO:0006520">
    <property type="term" value="P:amino acid metabolic process"/>
    <property type="evidence" value="ECO:0007669"/>
    <property type="project" value="InterPro"/>
</dbReference>
<dbReference type="FunFam" id="3.40.50.1370:FF:000001">
    <property type="entry name" value="Aspartate carbamoyltransferase"/>
    <property type="match status" value="1"/>
</dbReference>
<dbReference type="FunFam" id="3.40.50.1370:FF:000002">
    <property type="entry name" value="Aspartate carbamoyltransferase 2"/>
    <property type="match status" value="1"/>
</dbReference>
<dbReference type="Gene3D" id="3.40.50.1370">
    <property type="entry name" value="Aspartate/ornithine carbamoyltransferase"/>
    <property type="match status" value="2"/>
</dbReference>
<dbReference type="HAMAP" id="MF_00001">
    <property type="entry name" value="Asp_carb_tr"/>
    <property type="match status" value="1"/>
</dbReference>
<dbReference type="InterPro" id="IPR006132">
    <property type="entry name" value="Asp/Orn_carbamoyltranf_P-bd"/>
</dbReference>
<dbReference type="InterPro" id="IPR006130">
    <property type="entry name" value="Asp/Orn_carbamoylTrfase"/>
</dbReference>
<dbReference type="InterPro" id="IPR036901">
    <property type="entry name" value="Asp/Orn_carbamoylTrfase_sf"/>
</dbReference>
<dbReference type="InterPro" id="IPR002082">
    <property type="entry name" value="Asp_carbamoyltransf"/>
</dbReference>
<dbReference type="InterPro" id="IPR006131">
    <property type="entry name" value="Asp_carbamoyltransf_Asp/Orn-bd"/>
</dbReference>
<dbReference type="NCBIfam" id="TIGR00670">
    <property type="entry name" value="asp_carb_tr"/>
    <property type="match status" value="1"/>
</dbReference>
<dbReference type="NCBIfam" id="NF002032">
    <property type="entry name" value="PRK00856.1"/>
    <property type="match status" value="1"/>
</dbReference>
<dbReference type="PANTHER" id="PTHR45753:SF6">
    <property type="entry name" value="ASPARTATE CARBAMOYLTRANSFERASE"/>
    <property type="match status" value="1"/>
</dbReference>
<dbReference type="PANTHER" id="PTHR45753">
    <property type="entry name" value="ORNITHINE CARBAMOYLTRANSFERASE, MITOCHONDRIAL"/>
    <property type="match status" value="1"/>
</dbReference>
<dbReference type="Pfam" id="PF00185">
    <property type="entry name" value="OTCace"/>
    <property type="match status" value="1"/>
</dbReference>
<dbReference type="Pfam" id="PF02729">
    <property type="entry name" value="OTCace_N"/>
    <property type="match status" value="1"/>
</dbReference>
<dbReference type="PRINTS" id="PR00100">
    <property type="entry name" value="AOTCASE"/>
</dbReference>
<dbReference type="PRINTS" id="PR00101">
    <property type="entry name" value="ATCASE"/>
</dbReference>
<dbReference type="SUPFAM" id="SSF53671">
    <property type="entry name" value="Aspartate/ornithine carbamoyltransferase"/>
    <property type="match status" value="1"/>
</dbReference>
<dbReference type="PROSITE" id="PS00097">
    <property type="entry name" value="CARBAMOYLTRANSFERASE"/>
    <property type="match status" value="1"/>
</dbReference>
<keyword id="KW-0665">Pyrimidine biosynthesis</keyword>
<keyword id="KW-0808">Transferase</keyword>
<feature type="chain" id="PRO_0000301597" description="Aspartate carbamoyltransferase catalytic subunit">
    <location>
        <begin position="1"/>
        <end position="306"/>
    </location>
</feature>
<feature type="binding site" evidence="1">
    <location>
        <position position="55"/>
    </location>
    <ligand>
        <name>carbamoyl phosphate</name>
        <dbReference type="ChEBI" id="CHEBI:58228"/>
    </ligand>
</feature>
<feature type="binding site" evidence="1">
    <location>
        <position position="56"/>
    </location>
    <ligand>
        <name>carbamoyl phosphate</name>
        <dbReference type="ChEBI" id="CHEBI:58228"/>
    </ligand>
</feature>
<feature type="binding site" evidence="1">
    <location>
        <position position="84"/>
    </location>
    <ligand>
        <name>L-aspartate</name>
        <dbReference type="ChEBI" id="CHEBI:29991"/>
    </ligand>
</feature>
<feature type="binding site" evidence="1">
    <location>
        <position position="105"/>
    </location>
    <ligand>
        <name>carbamoyl phosphate</name>
        <dbReference type="ChEBI" id="CHEBI:58228"/>
    </ligand>
</feature>
<feature type="binding site" evidence="1">
    <location>
        <position position="133"/>
    </location>
    <ligand>
        <name>carbamoyl phosphate</name>
        <dbReference type="ChEBI" id="CHEBI:58228"/>
    </ligand>
</feature>
<feature type="binding site" evidence="1">
    <location>
        <position position="136"/>
    </location>
    <ligand>
        <name>carbamoyl phosphate</name>
        <dbReference type="ChEBI" id="CHEBI:58228"/>
    </ligand>
</feature>
<feature type="binding site" evidence="1">
    <location>
        <position position="166"/>
    </location>
    <ligand>
        <name>L-aspartate</name>
        <dbReference type="ChEBI" id="CHEBI:29991"/>
    </ligand>
</feature>
<feature type="binding site" evidence="1">
    <location>
        <position position="227"/>
    </location>
    <ligand>
        <name>L-aspartate</name>
        <dbReference type="ChEBI" id="CHEBI:29991"/>
    </ligand>
</feature>
<feature type="binding site" evidence="1">
    <location>
        <position position="265"/>
    </location>
    <ligand>
        <name>carbamoyl phosphate</name>
        <dbReference type="ChEBI" id="CHEBI:58228"/>
    </ligand>
</feature>
<feature type="binding site" evidence="1">
    <location>
        <position position="266"/>
    </location>
    <ligand>
        <name>carbamoyl phosphate</name>
        <dbReference type="ChEBI" id="CHEBI:58228"/>
    </ligand>
</feature>
<organism>
    <name type="scientific">Neisseria meningitidis serogroup C / serotype 2a (strain ATCC 700532 / DSM 15464 / FAM18)</name>
    <dbReference type="NCBI Taxonomy" id="272831"/>
    <lineage>
        <taxon>Bacteria</taxon>
        <taxon>Pseudomonadati</taxon>
        <taxon>Pseudomonadota</taxon>
        <taxon>Betaproteobacteria</taxon>
        <taxon>Neisseriales</taxon>
        <taxon>Neisseriaceae</taxon>
        <taxon>Neisseria</taxon>
    </lineage>
</organism>
<accession>A1KRE1</accession>
<gene>
    <name evidence="1" type="primary">pyrB</name>
    <name type="ordered locus">NMC0098</name>
</gene>
<name>PYRB_NEIMF</name>
<proteinExistence type="inferred from homology"/>